<comment type="subcellular location">
    <subcellularLocation>
        <location evidence="1">Cytoplasm</location>
    </subcellularLocation>
</comment>
<comment type="similarity">
    <text evidence="1">Belongs to the UPF0298 family.</text>
</comment>
<protein>
    <recommendedName>
        <fullName evidence="1">UPF0298 protein SP_0748</fullName>
    </recommendedName>
</protein>
<evidence type="ECO:0000255" key="1">
    <source>
        <dbReference type="HAMAP-Rule" id="MF_01126"/>
    </source>
</evidence>
<organism>
    <name type="scientific">Streptococcus pneumoniae serotype 4 (strain ATCC BAA-334 / TIGR4)</name>
    <dbReference type="NCBI Taxonomy" id="170187"/>
    <lineage>
        <taxon>Bacteria</taxon>
        <taxon>Bacillati</taxon>
        <taxon>Bacillota</taxon>
        <taxon>Bacilli</taxon>
        <taxon>Lactobacillales</taxon>
        <taxon>Streptococcaceae</taxon>
        <taxon>Streptococcus</taxon>
    </lineage>
</organism>
<name>Y748_STRPN</name>
<dbReference type="EMBL" id="AE005672">
    <property type="protein sequence ID" value="AAK74887.1"/>
    <property type="molecule type" value="Genomic_DNA"/>
</dbReference>
<dbReference type="PIR" id="F95086">
    <property type="entry name" value="F95086"/>
</dbReference>
<dbReference type="RefSeq" id="WP_000462126.1">
    <property type="nucleotide sequence ID" value="NZ_CP155539.1"/>
</dbReference>
<dbReference type="SMR" id="Q97RQ1"/>
<dbReference type="PaxDb" id="170187-SP_0748"/>
<dbReference type="EnsemblBacteria" id="AAK74887">
    <property type="protein sequence ID" value="AAK74887"/>
    <property type="gene ID" value="SP_0748"/>
</dbReference>
<dbReference type="KEGG" id="spn:SP_0748"/>
<dbReference type="eggNOG" id="COG4471">
    <property type="taxonomic scope" value="Bacteria"/>
</dbReference>
<dbReference type="PhylomeDB" id="Q97RQ1"/>
<dbReference type="BioCyc" id="SPNE170187:G1FZB-764-MONOMER"/>
<dbReference type="Proteomes" id="UP000000585">
    <property type="component" value="Chromosome"/>
</dbReference>
<dbReference type="GO" id="GO:0005737">
    <property type="term" value="C:cytoplasm"/>
    <property type="evidence" value="ECO:0007669"/>
    <property type="project" value="UniProtKB-SubCell"/>
</dbReference>
<dbReference type="HAMAP" id="MF_01126">
    <property type="entry name" value="UPF0298"/>
    <property type="match status" value="1"/>
</dbReference>
<dbReference type="InterPro" id="IPR016979">
    <property type="entry name" value="DUF2129"/>
</dbReference>
<dbReference type="NCBIfam" id="NF002631">
    <property type="entry name" value="PRK02302.1"/>
    <property type="match status" value="1"/>
</dbReference>
<dbReference type="Pfam" id="PF09902">
    <property type="entry name" value="DUF2129"/>
    <property type="match status" value="1"/>
</dbReference>
<dbReference type="PIRSF" id="PIRSF031653">
    <property type="entry name" value="UCP031653"/>
    <property type="match status" value="1"/>
</dbReference>
<keyword id="KW-0963">Cytoplasm</keyword>
<keyword id="KW-1185">Reference proteome</keyword>
<reference key="1">
    <citation type="journal article" date="2001" name="Science">
        <title>Complete genome sequence of a virulent isolate of Streptococcus pneumoniae.</title>
        <authorList>
            <person name="Tettelin H."/>
            <person name="Nelson K.E."/>
            <person name="Paulsen I.T."/>
            <person name="Eisen J.A."/>
            <person name="Read T.D."/>
            <person name="Peterson S.N."/>
            <person name="Heidelberg J.F."/>
            <person name="DeBoy R.T."/>
            <person name="Haft D.H."/>
            <person name="Dodson R.J."/>
            <person name="Durkin A.S."/>
            <person name="Gwinn M.L."/>
            <person name="Kolonay J.F."/>
            <person name="Nelson W.C."/>
            <person name="Peterson J.D."/>
            <person name="Umayam L.A."/>
            <person name="White O."/>
            <person name="Salzberg S.L."/>
            <person name="Lewis M.R."/>
            <person name="Radune D."/>
            <person name="Holtzapple E.K."/>
            <person name="Khouri H.M."/>
            <person name="Wolf A.M."/>
            <person name="Utterback T.R."/>
            <person name="Hansen C.L."/>
            <person name="McDonald L.A."/>
            <person name="Feldblyum T.V."/>
            <person name="Angiuoli S.V."/>
            <person name="Dickinson T."/>
            <person name="Hickey E.K."/>
            <person name="Holt I.E."/>
            <person name="Loftus B.J."/>
            <person name="Yang F."/>
            <person name="Smith H.O."/>
            <person name="Venter J.C."/>
            <person name="Dougherty B.A."/>
            <person name="Morrison D.A."/>
            <person name="Hollingshead S.K."/>
            <person name="Fraser C.M."/>
        </authorList>
    </citation>
    <scope>NUCLEOTIDE SEQUENCE [LARGE SCALE GENOMIC DNA]</scope>
    <source>
        <strain>ATCC BAA-334 / TIGR4</strain>
    </source>
</reference>
<sequence length="82" mass="9941">MFEKVNRSGLIIYLYYNRDAKKLQDYGDITYHSKKHRYLQLYVPTQEVEQLVGRLSKEKFIKKVRVCHIQELETPFVGNLYR</sequence>
<feature type="chain" id="PRO_0000074676" description="UPF0298 protein SP_0748">
    <location>
        <begin position="1"/>
        <end position="82"/>
    </location>
</feature>
<proteinExistence type="inferred from homology"/>
<gene>
    <name type="ordered locus">SP_0748</name>
</gene>
<accession>Q97RQ1</accession>